<feature type="chain" id="PRO_0000125661" description="Large ribosomal subunit protein uL1">
    <location>
        <begin position="1"/>
        <end position="233"/>
    </location>
</feature>
<keyword id="KW-1185">Reference proteome</keyword>
<keyword id="KW-0678">Repressor</keyword>
<keyword id="KW-0687">Ribonucleoprotein</keyword>
<keyword id="KW-0689">Ribosomal protein</keyword>
<keyword id="KW-0694">RNA-binding</keyword>
<keyword id="KW-0699">rRNA-binding</keyword>
<keyword id="KW-0810">Translation regulation</keyword>
<keyword id="KW-0820">tRNA-binding</keyword>
<protein>
    <recommendedName>
        <fullName evidence="1">Large ribosomal subunit protein uL1</fullName>
    </recommendedName>
    <alternativeName>
        <fullName evidence="2">50S ribosomal protein L1</fullName>
    </alternativeName>
</protein>
<comment type="function">
    <text evidence="1">Binds directly to 23S rRNA. The L1 stalk is quite mobile in the ribosome, and is involved in E site tRNA release.</text>
</comment>
<comment type="function">
    <text evidence="1">Protein L1 is also a translational repressor protein, it controls the translation of the L11 operon by binding to its mRNA.</text>
</comment>
<comment type="subunit">
    <text evidence="1">Part of the 50S ribosomal subunit.</text>
</comment>
<comment type="similarity">
    <text evidence="1">Belongs to the universal ribosomal protein uL1 family.</text>
</comment>
<proteinExistence type="inferred from homology"/>
<name>RL1_GEOKA</name>
<gene>
    <name evidence="1" type="primary">rplA</name>
    <name type="ordered locus">GK0094</name>
</gene>
<organism>
    <name type="scientific">Geobacillus kaustophilus (strain HTA426)</name>
    <dbReference type="NCBI Taxonomy" id="235909"/>
    <lineage>
        <taxon>Bacteria</taxon>
        <taxon>Bacillati</taxon>
        <taxon>Bacillota</taxon>
        <taxon>Bacilli</taxon>
        <taxon>Bacillales</taxon>
        <taxon>Anoxybacillaceae</taxon>
        <taxon>Geobacillus</taxon>
        <taxon>Geobacillus thermoleovorans group</taxon>
    </lineage>
</organism>
<accession>Q5L420</accession>
<reference key="1">
    <citation type="journal article" date="2004" name="Nucleic Acids Res.">
        <title>Thermoadaptation trait revealed by the genome sequence of thermophilic Geobacillus kaustophilus.</title>
        <authorList>
            <person name="Takami H."/>
            <person name="Takaki Y."/>
            <person name="Chee G.-J."/>
            <person name="Nishi S."/>
            <person name="Shimamura S."/>
            <person name="Suzuki H."/>
            <person name="Matsui S."/>
            <person name="Uchiyama I."/>
        </authorList>
    </citation>
    <scope>NUCLEOTIDE SEQUENCE [LARGE SCALE GENOMIC DNA]</scope>
    <source>
        <strain>HTA426</strain>
    </source>
</reference>
<dbReference type="EMBL" id="BA000043">
    <property type="protein sequence ID" value="BAD74379.1"/>
    <property type="molecule type" value="Genomic_DNA"/>
</dbReference>
<dbReference type="RefSeq" id="WP_011229609.1">
    <property type="nucleotide sequence ID" value="NC_006510.1"/>
</dbReference>
<dbReference type="SMR" id="Q5L420"/>
<dbReference type="STRING" id="235909.GK0094"/>
<dbReference type="GeneID" id="32062082"/>
<dbReference type="KEGG" id="gka:GK0094"/>
<dbReference type="eggNOG" id="COG0081">
    <property type="taxonomic scope" value="Bacteria"/>
</dbReference>
<dbReference type="HOGENOM" id="CLU_062853_0_0_9"/>
<dbReference type="Proteomes" id="UP000001172">
    <property type="component" value="Chromosome"/>
</dbReference>
<dbReference type="GO" id="GO:0015934">
    <property type="term" value="C:large ribosomal subunit"/>
    <property type="evidence" value="ECO:0007669"/>
    <property type="project" value="InterPro"/>
</dbReference>
<dbReference type="GO" id="GO:0019843">
    <property type="term" value="F:rRNA binding"/>
    <property type="evidence" value="ECO:0007669"/>
    <property type="project" value="UniProtKB-UniRule"/>
</dbReference>
<dbReference type="GO" id="GO:0003735">
    <property type="term" value="F:structural constituent of ribosome"/>
    <property type="evidence" value="ECO:0007669"/>
    <property type="project" value="InterPro"/>
</dbReference>
<dbReference type="GO" id="GO:0000049">
    <property type="term" value="F:tRNA binding"/>
    <property type="evidence" value="ECO:0007669"/>
    <property type="project" value="UniProtKB-KW"/>
</dbReference>
<dbReference type="GO" id="GO:0006417">
    <property type="term" value="P:regulation of translation"/>
    <property type="evidence" value="ECO:0007669"/>
    <property type="project" value="UniProtKB-KW"/>
</dbReference>
<dbReference type="GO" id="GO:0006412">
    <property type="term" value="P:translation"/>
    <property type="evidence" value="ECO:0007669"/>
    <property type="project" value="UniProtKB-UniRule"/>
</dbReference>
<dbReference type="CDD" id="cd00403">
    <property type="entry name" value="Ribosomal_L1"/>
    <property type="match status" value="1"/>
</dbReference>
<dbReference type="FunFam" id="3.40.50.790:FF:000001">
    <property type="entry name" value="50S ribosomal protein L1"/>
    <property type="match status" value="1"/>
</dbReference>
<dbReference type="Gene3D" id="3.30.190.20">
    <property type="match status" value="1"/>
</dbReference>
<dbReference type="Gene3D" id="3.40.50.790">
    <property type="match status" value="1"/>
</dbReference>
<dbReference type="HAMAP" id="MF_01318_B">
    <property type="entry name" value="Ribosomal_uL1_B"/>
    <property type="match status" value="1"/>
</dbReference>
<dbReference type="InterPro" id="IPR005878">
    <property type="entry name" value="Ribosom_uL1_bac-type"/>
</dbReference>
<dbReference type="InterPro" id="IPR002143">
    <property type="entry name" value="Ribosomal_uL1"/>
</dbReference>
<dbReference type="InterPro" id="IPR023674">
    <property type="entry name" value="Ribosomal_uL1-like"/>
</dbReference>
<dbReference type="InterPro" id="IPR028364">
    <property type="entry name" value="Ribosomal_uL1/biogenesis"/>
</dbReference>
<dbReference type="InterPro" id="IPR016095">
    <property type="entry name" value="Ribosomal_uL1_3-a/b-sand"/>
</dbReference>
<dbReference type="InterPro" id="IPR023673">
    <property type="entry name" value="Ribosomal_uL1_CS"/>
</dbReference>
<dbReference type="NCBIfam" id="TIGR01169">
    <property type="entry name" value="rplA_bact"/>
    <property type="match status" value="1"/>
</dbReference>
<dbReference type="PANTHER" id="PTHR36427">
    <property type="entry name" value="54S RIBOSOMAL PROTEIN L1, MITOCHONDRIAL"/>
    <property type="match status" value="1"/>
</dbReference>
<dbReference type="PANTHER" id="PTHR36427:SF3">
    <property type="entry name" value="LARGE RIBOSOMAL SUBUNIT PROTEIN UL1M"/>
    <property type="match status" value="1"/>
</dbReference>
<dbReference type="Pfam" id="PF00687">
    <property type="entry name" value="Ribosomal_L1"/>
    <property type="match status" value="1"/>
</dbReference>
<dbReference type="PIRSF" id="PIRSF002155">
    <property type="entry name" value="Ribosomal_L1"/>
    <property type="match status" value="1"/>
</dbReference>
<dbReference type="SUPFAM" id="SSF56808">
    <property type="entry name" value="Ribosomal protein L1"/>
    <property type="match status" value="1"/>
</dbReference>
<dbReference type="PROSITE" id="PS01199">
    <property type="entry name" value="RIBOSOMAL_L1"/>
    <property type="match status" value="1"/>
</dbReference>
<evidence type="ECO:0000255" key="1">
    <source>
        <dbReference type="HAMAP-Rule" id="MF_01318"/>
    </source>
</evidence>
<evidence type="ECO:0000305" key="2"/>
<sequence length="233" mass="24940">MPKRGKKYLEALKLVDRSKAYPIAEAIELVKKTNIAKFDATVEVAFRLGVDPKKADQQIRGAVVLPHGTGKVARVLVFAKGEKAKEAEAAGADYVGDAEYINKIQQGWFDFDVVVATPDMMGEVGKLGRILGPKGLMPNPKTGTVTFDVAKAVQEIKAGKVEYRVDKAGNIHVPIGKVSFDNEKLAENFAAVYEAILKAKPAAAKGTYVKNVTITSTMGPGIKVDPSTVAVAQ</sequence>